<name>HSAA_MYCTU</name>
<protein>
    <recommendedName>
        <fullName>Flavin-dependent monooxygenase, oxygenase subunit HsaA</fullName>
        <ecNumber evidence="3">1.14.14.12</ecNumber>
    </recommendedName>
    <alternativeName>
        <fullName>3-hydroxy-9,10-secoandrosta-1,3,5(10)-triene-9,17-dione 4-hydroxylase, oxygenase subunit</fullName>
    </alternativeName>
    <alternativeName>
        <fullName>3-hydroxy-9,10-secoandrosta-1,3,5(10)-triene-9,17-dione monooxygenase</fullName>
    </alternativeName>
</protein>
<dbReference type="EC" id="1.14.14.12" evidence="3"/>
<dbReference type="EMBL" id="AL123456">
    <property type="protein sequence ID" value="CCP46393.1"/>
    <property type="molecule type" value="Genomic_DNA"/>
</dbReference>
<dbReference type="PIR" id="H70605">
    <property type="entry name" value="H70605"/>
</dbReference>
<dbReference type="RefSeq" id="NP_218087.1">
    <property type="nucleotide sequence ID" value="NC_000962.3"/>
</dbReference>
<dbReference type="RefSeq" id="WP_003900101.1">
    <property type="nucleotide sequence ID" value="NZ_NVQJ01000014.1"/>
</dbReference>
<dbReference type="PDB" id="3AFE">
    <property type="method" value="X-ray"/>
    <property type="resolution" value="2.50 A"/>
    <property type="chains" value="A/B/C/D=1-394"/>
</dbReference>
<dbReference type="PDB" id="3AFF">
    <property type="method" value="X-ray"/>
    <property type="resolution" value="2.00 A"/>
    <property type="chains" value="A/B=1-394"/>
</dbReference>
<dbReference type="PDBsum" id="3AFE"/>
<dbReference type="PDBsum" id="3AFF"/>
<dbReference type="SMR" id="P9WJA1"/>
<dbReference type="FunCoup" id="P9WJA1">
    <property type="interactions" value="12"/>
</dbReference>
<dbReference type="STRING" id="83332.Rv3570c"/>
<dbReference type="SwissLipids" id="SLP:000001164"/>
<dbReference type="PaxDb" id="83332-Rv3570c"/>
<dbReference type="GeneID" id="887241"/>
<dbReference type="KEGG" id="mtu:Rv3570c"/>
<dbReference type="KEGG" id="mtv:RVBD_3570c"/>
<dbReference type="TubercuList" id="Rv3570c"/>
<dbReference type="eggNOG" id="COG1960">
    <property type="taxonomic scope" value="Bacteria"/>
</dbReference>
<dbReference type="InParanoid" id="P9WJA1"/>
<dbReference type="OrthoDB" id="3404950at2"/>
<dbReference type="PhylomeDB" id="P9WJA1"/>
<dbReference type="BioCyc" id="MetaCyc:G185E-7848-MONOMER"/>
<dbReference type="BRENDA" id="1.14.14.12">
    <property type="organism ID" value="3445"/>
</dbReference>
<dbReference type="SABIO-RK" id="P9WJA1"/>
<dbReference type="UniPathway" id="UPA00062"/>
<dbReference type="EvolutionaryTrace" id="P9WJA1"/>
<dbReference type="Proteomes" id="UP000001584">
    <property type="component" value="Chromosome"/>
</dbReference>
<dbReference type="GO" id="GO:0005737">
    <property type="term" value="C:cytoplasm"/>
    <property type="evidence" value="ECO:0000318"/>
    <property type="project" value="GO_Central"/>
</dbReference>
<dbReference type="GO" id="GO:0005886">
    <property type="term" value="C:plasma membrane"/>
    <property type="evidence" value="ECO:0007005"/>
    <property type="project" value="MTBBASE"/>
</dbReference>
<dbReference type="GO" id="GO:0036383">
    <property type="term" value="F:3-hydroxy-9,10-secoandrosta-1,3,5(10)-triene-9,17-dione monooxygenase activity"/>
    <property type="evidence" value="ECO:0007669"/>
    <property type="project" value="UniProtKB-EC"/>
</dbReference>
<dbReference type="GO" id="GO:0003995">
    <property type="term" value="F:acyl-CoA dehydrogenase activity"/>
    <property type="evidence" value="ECO:0000318"/>
    <property type="project" value="GO_Central"/>
</dbReference>
<dbReference type="GO" id="GO:0050660">
    <property type="term" value="F:flavin adenine dinucleotide binding"/>
    <property type="evidence" value="ECO:0000314"/>
    <property type="project" value="UniProtKB"/>
</dbReference>
<dbReference type="GO" id="GO:0016712">
    <property type="term" value="F:oxidoreductase activity, acting on paired donors, with incorporation or reduction of molecular oxygen, reduced flavin or flavoprotein as one donor, and incorporation of one atom of oxygen"/>
    <property type="evidence" value="ECO:0000314"/>
    <property type="project" value="MTBBASE"/>
</dbReference>
<dbReference type="GO" id="GO:0051701">
    <property type="term" value="P:biological process involved in interaction with host"/>
    <property type="evidence" value="ECO:0000315"/>
    <property type="project" value="MTBBASE"/>
</dbReference>
<dbReference type="GO" id="GO:0006707">
    <property type="term" value="P:cholesterol catabolic process"/>
    <property type="evidence" value="ECO:0000314"/>
    <property type="project" value="MTBBASE"/>
</dbReference>
<dbReference type="GO" id="GO:0033539">
    <property type="term" value="P:fatty acid beta-oxidation using acyl-CoA dehydrogenase"/>
    <property type="evidence" value="ECO:0000318"/>
    <property type="project" value="GO_Central"/>
</dbReference>
<dbReference type="GO" id="GO:0006694">
    <property type="term" value="P:steroid biosynthetic process"/>
    <property type="evidence" value="ECO:0000314"/>
    <property type="project" value="UniProtKB"/>
</dbReference>
<dbReference type="CDD" id="cd01159">
    <property type="entry name" value="NcnH"/>
    <property type="match status" value="1"/>
</dbReference>
<dbReference type="FunFam" id="1.20.140.10:FF:000024">
    <property type="entry name" value="Flavin-dependent monooxygenase"/>
    <property type="match status" value="1"/>
</dbReference>
<dbReference type="FunFam" id="2.40.110.10:FF:000021">
    <property type="entry name" value="Flavin-dependent monooxygenase, oxygenase subunit"/>
    <property type="match status" value="1"/>
</dbReference>
<dbReference type="FunFam" id="1.10.540.10:FF:000062">
    <property type="entry name" value="Flavin-dependent monooxygenase, oxygenase subunit HsaA"/>
    <property type="match status" value="1"/>
</dbReference>
<dbReference type="Gene3D" id="1.10.540.10">
    <property type="entry name" value="Acyl-CoA dehydrogenase/oxidase, N-terminal domain"/>
    <property type="match status" value="1"/>
</dbReference>
<dbReference type="Gene3D" id="2.40.110.10">
    <property type="entry name" value="Butyryl-CoA Dehydrogenase, subunit A, domain 2"/>
    <property type="match status" value="1"/>
</dbReference>
<dbReference type="Gene3D" id="1.20.140.10">
    <property type="entry name" value="Butyryl-CoA Dehydrogenase, subunit A, domain 3"/>
    <property type="match status" value="1"/>
</dbReference>
<dbReference type="InterPro" id="IPR050741">
    <property type="entry name" value="Acyl-CoA_dehydrogenase"/>
</dbReference>
<dbReference type="InterPro" id="IPR013107">
    <property type="entry name" value="Acyl-CoA_DH_C"/>
</dbReference>
<dbReference type="InterPro" id="IPR046373">
    <property type="entry name" value="Acyl-CoA_Oxase/DH_mid-dom_sf"/>
</dbReference>
<dbReference type="InterPro" id="IPR036250">
    <property type="entry name" value="AcylCo_DH-like_C"/>
</dbReference>
<dbReference type="InterPro" id="IPR013786">
    <property type="entry name" value="AcylCoA_DH/ox_N"/>
</dbReference>
<dbReference type="InterPro" id="IPR037069">
    <property type="entry name" value="AcylCoA_DH/ox_N_sf"/>
</dbReference>
<dbReference type="InterPro" id="IPR009100">
    <property type="entry name" value="AcylCoA_DH/oxidase_NM_dom_sf"/>
</dbReference>
<dbReference type="InterPro" id="IPR054617">
    <property type="entry name" value="HsaA"/>
</dbReference>
<dbReference type="NCBIfam" id="NF045629">
    <property type="entry name" value="monooxsub_HsaA"/>
    <property type="match status" value="1"/>
</dbReference>
<dbReference type="PANTHER" id="PTHR48083:SF19">
    <property type="entry name" value="FLAVIN-DEPENDENT MONOOXYGENASE, OXYGENASE SUBUNIT HSAA"/>
    <property type="match status" value="1"/>
</dbReference>
<dbReference type="PANTHER" id="PTHR48083">
    <property type="entry name" value="MEDIUM-CHAIN SPECIFIC ACYL-COA DEHYDROGENASE, MITOCHONDRIAL-RELATED"/>
    <property type="match status" value="1"/>
</dbReference>
<dbReference type="Pfam" id="PF08028">
    <property type="entry name" value="Acyl-CoA_dh_2"/>
    <property type="match status" value="1"/>
</dbReference>
<dbReference type="Pfam" id="PF02771">
    <property type="entry name" value="Acyl-CoA_dh_N"/>
    <property type="match status" value="1"/>
</dbReference>
<dbReference type="PIRSF" id="PIRSF016578">
    <property type="entry name" value="HsaA"/>
    <property type="match status" value="1"/>
</dbReference>
<dbReference type="SUPFAM" id="SSF47203">
    <property type="entry name" value="Acyl-CoA dehydrogenase C-terminal domain-like"/>
    <property type="match status" value="1"/>
</dbReference>
<dbReference type="SUPFAM" id="SSF56645">
    <property type="entry name" value="Acyl-CoA dehydrogenase NM domain-like"/>
    <property type="match status" value="1"/>
</dbReference>
<feature type="chain" id="PRO_0000404501" description="Flavin-dependent monooxygenase, oxygenase subunit HsaA">
    <location>
        <begin position="1"/>
        <end position="394"/>
    </location>
</feature>
<feature type="binding site" evidence="1">
    <location>
        <position position="84"/>
    </location>
    <ligand>
        <name>FMN</name>
        <dbReference type="ChEBI" id="CHEBI:58210"/>
    </ligand>
</feature>
<feature type="binding site" evidence="1">
    <location>
        <begin position="118"/>
        <end position="120"/>
    </location>
    <ligand>
        <name>FMN</name>
        <dbReference type="ChEBI" id="CHEBI:58210"/>
    </ligand>
</feature>
<feature type="binding site" evidence="1">
    <location>
        <begin position="141"/>
        <end position="143"/>
    </location>
    <ligand>
        <name>FMN</name>
        <dbReference type="ChEBI" id="CHEBI:58210"/>
    </ligand>
</feature>
<feature type="binding site" evidence="1">
    <location>
        <position position="263"/>
    </location>
    <ligand>
        <name>FMN</name>
        <dbReference type="ChEBI" id="CHEBI:58210"/>
    </ligand>
</feature>
<feature type="binding site" evidence="1">
    <location>
        <begin position="346"/>
        <end position="347"/>
    </location>
    <ligand>
        <name>FMN</name>
        <dbReference type="ChEBI" id="CHEBI:58210"/>
    </ligand>
</feature>
<feature type="binding site" evidence="1">
    <location>
        <begin position="368"/>
        <end position="369"/>
    </location>
    <ligand>
        <name>FMN</name>
        <dbReference type="ChEBI" id="CHEBI:58210"/>
    </ligand>
</feature>
<feature type="helix" evidence="7">
    <location>
        <begin position="9"/>
        <end position="33"/>
    </location>
</feature>
<feature type="helix" evidence="7">
    <location>
        <begin position="38"/>
        <end position="47"/>
    </location>
</feature>
<feature type="helix" evidence="7">
    <location>
        <begin position="49"/>
        <end position="51"/>
    </location>
</feature>
<feature type="strand" evidence="7">
    <location>
        <begin position="52"/>
        <end position="54"/>
    </location>
</feature>
<feature type="helix" evidence="7">
    <location>
        <begin position="56"/>
        <end position="58"/>
    </location>
</feature>
<feature type="helix" evidence="7">
    <location>
        <begin position="65"/>
        <end position="76"/>
    </location>
</feature>
<feature type="helix" evidence="7">
    <location>
        <begin position="80"/>
        <end position="96"/>
    </location>
</feature>
<feature type="helix" evidence="7">
    <location>
        <begin position="101"/>
        <end position="108"/>
    </location>
</feature>
<feature type="strand" evidence="7">
    <location>
        <begin position="116"/>
        <end position="119"/>
    </location>
</feature>
<feature type="strand" evidence="7">
    <location>
        <begin position="123"/>
        <end position="129"/>
    </location>
</feature>
<feature type="strand" evidence="7">
    <location>
        <begin position="132"/>
        <end position="142"/>
    </location>
</feature>
<feature type="helix" evidence="7">
    <location>
        <begin position="145"/>
        <end position="147"/>
    </location>
</feature>
<feature type="strand" evidence="7">
    <location>
        <begin position="149"/>
        <end position="159"/>
    </location>
</feature>
<feature type="strand" evidence="7">
    <location>
        <begin position="162"/>
        <end position="172"/>
    </location>
</feature>
<feature type="helix" evidence="7">
    <location>
        <begin position="173"/>
        <end position="175"/>
    </location>
</feature>
<feature type="strand" evidence="7">
    <location>
        <begin position="177"/>
        <end position="179"/>
    </location>
</feature>
<feature type="strand" evidence="6">
    <location>
        <begin position="184"/>
        <end position="186"/>
    </location>
</feature>
<feature type="helix" evidence="7">
    <location>
        <begin position="188"/>
        <end position="190"/>
    </location>
</feature>
<feature type="strand" evidence="7">
    <location>
        <begin position="193"/>
        <end position="203"/>
    </location>
</feature>
<feature type="helix" evidence="7">
    <location>
        <begin position="204"/>
        <end position="206"/>
    </location>
</feature>
<feature type="strand" evidence="7">
    <location>
        <begin position="207"/>
        <end position="209"/>
    </location>
</feature>
<feature type="helix" evidence="7">
    <location>
        <begin position="210"/>
        <end position="214"/>
    </location>
</feature>
<feature type="helix" evidence="7">
    <location>
        <begin position="219"/>
        <end position="222"/>
    </location>
</feature>
<feature type="helix" evidence="7">
    <location>
        <begin position="227"/>
        <end position="230"/>
    </location>
</feature>
<feature type="helix" evidence="7">
    <location>
        <begin position="233"/>
        <end position="259"/>
    </location>
</feature>
<feature type="turn" evidence="6">
    <location>
        <begin position="267"/>
        <end position="269"/>
    </location>
</feature>
<feature type="helix" evidence="7">
    <location>
        <begin position="286"/>
        <end position="309"/>
    </location>
</feature>
<feature type="helix" evidence="7">
    <location>
        <begin position="316"/>
        <end position="342"/>
    </location>
</feature>
<feature type="turn" evidence="7">
    <location>
        <begin position="346"/>
        <end position="349"/>
    </location>
</feature>
<feature type="helix" evidence="7">
    <location>
        <begin position="354"/>
        <end position="370"/>
    </location>
</feature>
<feature type="helix" evidence="7">
    <location>
        <begin position="374"/>
        <end position="377"/>
    </location>
</feature>
<feature type="helix" evidence="7">
    <location>
        <begin position="384"/>
        <end position="386"/>
    </location>
</feature>
<feature type="helix" evidence="7">
    <location>
        <begin position="390"/>
        <end position="393"/>
    </location>
</feature>
<accession>P9WJA1</accession>
<accession>L0TCY6</accession>
<accession>P96852</accession>
<accession>Q7D595</accession>
<organism>
    <name type="scientific">Mycobacterium tuberculosis (strain ATCC 25618 / H37Rv)</name>
    <dbReference type="NCBI Taxonomy" id="83332"/>
    <lineage>
        <taxon>Bacteria</taxon>
        <taxon>Bacillati</taxon>
        <taxon>Actinomycetota</taxon>
        <taxon>Actinomycetes</taxon>
        <taxon>Mycobacteriales</taxon>
        <taxon>Mycobacteriaceae</taxon>
        <taxon>Mycobacterium</taxon>
        <taxon>Mycobacterium tuberculosis complex</taxon>
    </lineage>
</organism>
<proteinExistence type="evidence at protein level"/>
<evidence type="ECO:0000250" key="1"/>
<evidence type="ECO:0000269" key="2">
    <source>
    </source>
</evidence>
<evidence type="ECO:0000269" key="3">
    <source>
    </source>
</evidence>
<evidence type="ECO:0000303" key="4">
    <source>
    </source>
</evidence>
<evidence type="ECO:0000305" key="5"/>
<evidence type="ECO:0007829" key="6">
    <source>
        <dbReference type="PDB" id="3AFE"/>
    </source>
</evidence>
<evidence type="ECO:0007829" key="7">
    <source>
        <dbReference type="PDB" id="3AFF"/>
    </source>
</evidence>
<sequence length="394" mass="43143">MTSIQQRDAQSVLAAIDNLLPEIRDRAQATEDLRRLPDETVKALDDVGFFTLLQPQQWGGLQCDPALFFEATRRLASVCGSTGWVSSIVGVHNWHLALFDQRAQEEVWGEDPSTRISSSYAPMGAGVVVDGGYLVNGSWNWSSGCDHASWTFVGGPVIKDGRPVDFGSFLIPRSEYEIKDVWYVVGLRGTGSNTLVVKDVFVPRHRFLSYKAMNDHTAGGLATNSAPVYKMPWGTMHPTTISAPIVGMAYGAYAAHVEHQGKRVRAAFAGEKAKDDPFAKVRIAEAASDIDAAWRQLIGNVSDEYALLAAGKEIPFELRARARRDQVRATGRSIASIDRLFEASGATALSNEAPIQRFWRDAHAGRVHAANDPERAYVIFGNHEFGLPPGDTMV</sequence>
<reference key="1">
    <citation type="journal article" date="1998" name="Nature">
        <title>Deciphering the biology of Mycobacterium tuberculosis from the complete genome sequence.</title>
        <authorList>
            <person name="Cole S.T."/>
            <person name="Brosch R."/>
            <person name="Parkhill J."/>
            <person name="Garnier T."/>
            <person name="Churcher C.M."/>
            <person name="Harris D.E."/>
            <person name="Gordon S.V."/>
            <person name="Eiglmeier K."/>
            <person name="Gas S."/>
            <person name="Barry C.E. III"/>
            <person name="Tekaia F."/>
            <person name="Badcock K."/>
            <person name="Basham D."/>
            <person name="Brown D."/>
            <person name="Chillingworth T."/>
            <person name="Connor R."/>
            <person name="Davies R.M."/>
            <person name="Devlin K."/>
            <person name="Feltwell T."/>
            <person name="Gentles S."/>
            <person name="Hamlin N."/>
            <person name="Holroyd S."/>
            <person name="Hornsby T."/>
            <person name="Jagels K."/>
            <person name="Krogh A."/>
            <person name="McLean J."/>
            <person name="Moule S."/>
            <person name="Murphy L.D."/>
            <person name="Oliver S."/>
            <person name="Osborne J."/>
            <person name="Quail M.A."/>
            <person name="Rajandream M.A."/>
            <person name="Rogers J."/>
            <person name="Rutter S."/>
            <person name="Seeger K."/>
            <person name="Skelton S."/>
            <person name="Squares S."/>
            <person name="Squares R."/>
            <person name="Sulston J.E."/>
            <person name="Taylor K."/>
            <person name="Whitehead S."/>
            <person name="Barrell B.G."/>
        </authorList>
    </citation>
    <scope>NUCLEOTIDE SEQUENCE [LARGE SCALE GENOMIC DNA]</scope>
    <source>
        <strain>ATCC 25618 / H37Rv</strain>
    </source>
</reference>
<reference key="2">
    <citation type="journal article" date="2007" name="Mol. Microbiol.">
        <title>A highly conserved transcriptional repressor controls a large regulon involved in lipid degradation in Mycobacterium smegmatis and Mycobacterium tuberculosis.</title>
        <authorList>
            <person name="Kendall S.L."/>
            <person name="Withers M."/>
            <person name="Soffair C.N."/>
            <person name="Moreland N.J."/>
            <person name="Gurcha S."/>
            <person name="Sidders B."/>
            <person name="Frita R."/>
            <person name="Ten Bokum A."/>
            <person name="Besra G.S."/>
            <person name="Lott J.S."/>
            <person name="Stoker N.G."/>
        </authorList>
    </citation>
    <scope>INDUCTION</scope>
    <source>
        <strain>ATCC 25618 / H37Rv</strain>
    </source>
</reference>
<reference key="3">
    <citation type="journal article" date="2011" name="Mol. Cell. Proteomics">
        <title>Proteogenomic analysis of Mycobacterium tuberculosis by high resolution mass spectrometry.</title>
        <authorList>
            <person name="Kelkar D.S."/>
            <person name="Kumar D."/>
            <person name="Kumar P."/>
            <person name="Balakrishnan L."/>
            <person name="Muthusamy B."/>
            <person name="Yadav A.K."/>
            <person name="Shrivastava P."/>
            <person name="Marimuthu A."/>
            <person name="Anand S."/>
            <person name="Sundaram H."/>
            <person name="Kingsbury R."/>
            <person name="Harsha H.C."/>
            <person name="Nair B."/>
            <person name="Prasad T.S."/>
            <person name="Chauhan D.S."/>
            <person name="Katoch K."/>
            <person name="Katoch V.M."/>
            <person name="Kumar P."/>
            <person name="Chaerkady R."/>
            <person name="Ramachandran S."/>
            <person name="Dash D."/>
            <person name="Pandey A."/>
        </authorList>
    </citation>
    <scope>IDENTIFICATION BY MASS SPECTROMETRY [LARGE SCALE ANALYSIS]</scope>
    <source>
        <strain>ATCC 25618 / H37Rv</strain>
    </source>
</reference>
<reference key="4">
    <citation type="journal article" date="2010" name="J. Biol. Chem.">
        <title>A flavin-dependent monooxygenase from Mycobacterium tuberculosis involved in cholesterol catabolism.</title>
        <authorList>
            <person name="Dresen C."/>
            <person name="Lin L.Y."/>
            <person name="D'Angelo I."/>
            <person name="Tocheva E.I."/>
            <person name="Strynadka N."/>
            <person name="Eltis L.D."/>
        </authorList>
    </citation>
    <scope>X-RAY CRYSTALLOGRAPHY (2.0 ANGSTROMS)</scope>
    <scope>FUNCTION AS A HYDROXYLASE</scope>
    <scope>CATALYTIC ACTIVITY</scope>
    <scope>BIOPHYSICOCHEMICAL PROPERTIES</scope>
    <scope>SUBSTRATE SPECIFICITY</scope>
    <scope>SUBUNIT</scope>
    <source>
        <strain>ATCC 25618 / H37Rv</strain>
    </source>
</reference>
<gene>
    <name evidence="4" type="primary">hsaA</name>
    <name type="ordered locus">Rv3570c</name>
</gene>
<comment type="function">
    <text evidence="3">Catalyzes the o-hydroxylation of 3-hydroxy-9,10-secoandrosta-1,3,5(10)-triene-9,17-dione (3-HSA) to 3,4-dihydroxy-9,10-secoandrosta-1,3,5(10)-triene-9,17-dione (3,4-DHSA) in the catabolism of cholesterol. Can also use 3,17-dihydroxy-9,10-seconandrost-1,3,5(10)-triene-9-one (3,17-DHSA), but it has higher specificity for 3-HSA than for 3,17-DHSA. Can use either FADH(2) or FMNH(2) as flavin cosubstrate. Also catalyzes the o-hydroxylation of a range of p-substituted phenols to generate the corresponding catechols.</text>
</comment>
<comment type="catalytic activity">
    <reaction evidence="3">
        <text>3-hydroxy-9,10-secoandrosta-1,3,5(10)-triene-9,17-dione + FMNH2 + O2 = 3,4-dihydroxy-9,10-secoandrosta-1,3,5(10)-triene-9,17-dione + FMN + H2O + H(+)</text>
        <dbReference type="Rhea" id="RHEA:31731"/>
        <dbReference type="ChEBI" id="CHEBI:15377"/>
        <dbReference type="ChEBI" id="CHEBI:15378"/>
        <dbReference type="ChEBI" id="CHEBI:15379"/>
        <dbReference type="ChEBI" id="CHEBI:15896"/>
        <dbReference type="ChEBI" id="CHEBI:57618"/>
        <dbReference type="ChEBI" id="CHEBI:58210"/>
        <dbReference type="ChEBI" id="CHEBI:63245"/>
        <dbReference type="EC" id="1.14.14.12"/>
    </reaction>
    <physiologicalReaction direction="left-to-right" evidence="3">
        <dbReference type="Rhea" id="RHEA:31732"/>
    </physiologicalReaction>
</comment>
<comment type="catalytic activity">
    <reaction evidence="3">
        <text>3,17-dihydroxy-9,10-secoandrost-1,3,5(10)-triene-9-one + FMNH2 + O2 = 3,4,17-trihydroxy-9,10-secoandrost-1,3,5(10)-triene-9-one + FMN + H2O + H(+)</text>
        <dbReference type="Rhea" id="RHEA:45988"/>
        <dbReference type="ChEBI" id="CHEBI:15377"/>
        <dbReference type="ChEBI" id="CHEBI:15378"/>
        <dbReference type="ChEBI" id="CHEBI:15379"/>
        <dbReference type="ChEBI" id="CHEBI:57618"/>
        <dbReference type="ChEBI" id="CHEBI:58210"/>
        <dbReference type="ChEBI" id="CHEBI:85575"/>
        <dbReference type="ChEBI" id="CHEBI:85576"/>
    </reaction>
    <physiologicalReaction direction="left-to-right" evidence="3">
        <dbReference type="Rhea" id="RHEA:45989"/>
    </physiologicalReaction>
</comment>
<comment type="biophysicochemical properties">
    <kinetics>
        <KM evidence="3">97 uM for 3-HSA (with FAD at pH 7 and at 25 degrees Celsius)</KM>
        <KM evidence="3">100 uM for oxygen (with FMN at pH 7 and at 25 degrees Celsius)</KM>
        <KM evidence="3">200 uM for 3-HSA (with FMN at pH 7 and at 25 degrees Celsius)</KM>
        <KM evidence="3">350 uM for 3,17-DHSA (with FMN at pH 7 and at 25 degrees Celsius)</KM>
        <KM evidence="3">1440 uM for 3-hydroxybiphenyl (3-HB) (with FMN at pH 7 and at 25 degrees Celsius)</KM>
    </kinetics>
</comment>
<comment type="pathway">
    <text>Lipid metabolism; steroid biosynthesis.</text>
</comment>
<comment type="subunit">
    <text evidence="3">Homotetramer under anaerobic conditions. HsaAB monooxygenase consists of an oxygenase component HsaA and a reductase component HsaB.</text>
</comment>
<comment type="induction">
    <text evidence="2">Induced by KstR.</text>
</comment>
<comment type="miscellaneous">
    <text>Cholesterol metabolism contributes to the survival of M.tuberculosis in the host by helping the bacterial multiplication during earlier stages of infection and to the dissemination of the pathogen in the host.</text>
</comment>
<comment type="similarity">
    <text evidence="5">Belongs to the HpaH/HsaA monooxygenase family.</text>
</comment>
<keyword id="KW-0002">3D-structure</keyword>
<keyword id="KW-0058">Aromatic hydrocarbons catabolism</keyword>
<keyword id="KW-0274">FAD</keyword>
<keyword id="KW-0285">Flavoprotein</keyword>
<keyword id="KW-0288">FMN</keyword>
<keyword id="KW-0442">Lipid degradation</keyword>
<keyword id="KW-0443">Lipid metabolism</keyword>
<keyword id="KW-0503">Monooxygenase</keyword>
<keyword id="KW-0560">Oxidoreductase</keyword>
<keyword id="KW-1185">Reference proteome</keyword>
<keyword id="KW-0753">Steroid metabolism</keyword>